<proteinExistence type="inferred from homology"/>
<organism>
    <name type="scientific">Escherichia coli (strain 55989 / EAEC)</name>
    <dbReference type="NCBI Taxonomy" id="585055"/>
    <lineage>
        <taxon>Bacteria</taxon>
        <taxon>Pseudomonadati</taxon>
        <taxon>Pseudomonadota</taxon>
        <taxon>Gammaproteobacteria</taxon>
        <taxon>Enterobacterales</taxon>
        <taxon>Enterobacteriaceae</taxon>
        <taxon>Escherichia</taxon>
    </lineage>
</organism>
<sequence length="220" mass="24883">MAYRDQPLGELALSIPRASALFRKYDMDYCCGGKQTLARAAARKELDVEVIEAELAKLAEQPIEKDWRSAPLAEIIDHIIVRYHDRHREQLPELILQATKVERVHADKPSVPKGLTKYLTMLHEELSSHMMKEEQILFPMIKQGMGSQAMGPISVMESEHDEAGELLEVIKHTTNNVTPPPEACTTWKAMYNGINELIDDLMDHISLENNVLFPRALAGE</sequence>
<name>YTFE_ECO55</name>
<evidence type="ECO:0000255" key="1">
    <source>
        <dbReference type="HAMAP-Rule" id="MF_01606"/>
    </source>
</evidence>
<gene>
    <name evidence="1" type="primary">ytfE</name>
    <name type="ordered locus">EC55989_4769</name>
</gene>
<feature type="chain" id="PRO_1000185840" description="Iron-sulfur cluster repair protein YtfE">
    <location>
        <begin position="1"/>
        <end position="220"/>
    </location>
</feature>
<keyword id="KW-0963">Cytoplasm</keyword>
<keyword id="KW-0408">Iron</keyword>
<keyword id="KW-0479">Metal-binding</keyword>
<keyword id="KW-1185">Reference proteome</keyword>
<keyword id="KW-0346">Stress response</keyword>
<reference key="1">
    <citation type="journal article" date="2009" name="PLoS Genet.">
        <title>Organised genome dynamics in the Escherichia coli species results in highly diverse adaptive paths.</title>
        <authorList>
            <person name="Touchon M."/>
            <person name="Hoede C."/>
            <person name="Tenaillon O."/>
            <person name="Barbe V."/>
            <person name="Baeriswyl S."/>
            <person name="Bidet P."/>
            <person name="Bingen E."/>
            <person name="Bonacorsi S."/>
            <person name="Bouchier C."/>
            <person name="Bouvet O."/>
            <person name="Calteau A."/>
            <person name="Chiapello H."/>
            <person name="Clermont O."/>
            <person name="Cruveiller S."/>
            <person name="Danchin A."/>
            <person name="Diard M."/>
            <person name="Dossat C."/>
            <person name="Karoui M.E."/>
            <person name="Frapy E."/>
            <person name="Garry L."/>
            <person name="Ghigo J.M."/>
            <person name="Gilles A.M."/>
            <person name="Johnson J."/>
            <person name="Le Bouguenec C."/>
            <person name="Lescat M."/>
            <person name="Mangenot S."/>
            <person name="Martinez-Jehanne V."/>
            <person name="Matic I."/>
            <person name="Nassif X."/>
            <person name="Oztas S."/>
            <person name="Petit M.A."/>
            <person name="Pichon C."/>
            <person name="Rouy Z."/>
            <person name="Ruf C.S."/>
            <person name="Schneider D."/>
            <person name="Tourret J."/>
            <person name="Vacherie B."/>
            <person name="Vallenet D."/>
            <person name="Medigue C."/>
            <person name="Rocha E.P.C."/>
            <person name="Denamur E."/>
        </authorList>
    </citation>
    <scope>NUCLEOTIDE SEQUENCE [LARGE SCALE GENOMIC DNA]</scope>
    <source>
        <strain>55989 / EAEC</strain>
    </source>
</reference>
<comment type="function">
    <text evidence="1">Di-iron-containing protein involved in the repair of iron-sulfur clusters damaged by oxidative and nitrosative stress conditions.</text>
</comment>
<comment type="subunit">
    <text evidence="1">Homodimer.</text>
</comment>
<comment type="subcellular location">
    <subcellularLocation>
        <location evidence="1">Cytoplasm</location>
    </subcellularLocation>
</comment>
<comment type="similarity">
    <text evidence="1">Belongs to the RIC family. YtfE subfamily.</text>
</comment>
<dbReference type="EMBL" id="CU928145">
    <property type="protein sequence ID" value="CAV01718.1"/>
    <property type="molecule type" value="Genomic_DNA"/>
</dbReference>
<dbReference type="RefSeq" id="WP_000331456.1">
    <property type="nucleotide sequence ID" value="NZ_CP028304.1"/>
</dbReference>
<dbReference type="SMR" id="B7LCS2"/>
<dbReference type="GeneID" id="93777612"/>
<dbReference type="KEGG" id="eck:EC55989_4769"/>
<dbReference type="HOGENOM" id="CLU_076075_2_0_6"/>
<dbReference type="Proteomes" id="UP000000746">
    <property type="component" value="Chromosome"/>
</dbReference>
<dbReference type="GO" id="GO:0005737">
    <property type="term" value="C:cytoplasm"/>
    <property type="evidence" value="ECO:0007669"/>
    <property type="project" value="UniProtKB-SubCell"/>
</dbReference>
<dbReference type="GO" id="GO:0046872">
    <property type="term" value="F:metal ion binding"/>
    <property type="evidence" value="ECO:0007669"/>
    <property type="project" value="UniProtKB-KW"/>
</dbReference>
<dbReference type="GO" id="GO:0030091">
    <property type="term" value="P:protein repair"/>
    <property type="evidence" value="ECO:0007669"/>
    <property type="project" value="UniProtKB-UniRule"/>
</dbReference>
<dbReference type="GO" id="GO:0051409">
    <property type="term" value="P:response to nitrosative stress"/>
    <property type="evidence" value="ECO:0007669"/>
    <property type="project" value="UniProtKB-UniRule"/>
</dbReference>
<dbReference type="GO" id="GO:0006979">
    <property type="term" value="P:response to oxidative stress"/>
    <property type="evidence" value="ECO:0007669"/>
    <property type="project" value="UniProtKB-UniRule"/>
</dbReference>
<dbReference type="CDD" id="cd12108">
    <property type="entry name" value="Hr-like"/>
    <property type="match status" value="1"/>
</dbReference>
<dbReference type="FunFam" id="1.20.120.520:FF:000001">
    <property type="entry name" value="Iron-sulfur cluster repair protein YtfE"/>
    <property type="match status" value="1"/>
</dbReference>
<dbReference type="Gene3D" id="1.20.120.520">
    <property type="entry name" value="nmb1532 protein domain like"/>
    <property type="match status" value="1"/>
</dbReference>
<dbReference type="HAMAP" id="MF_01606">
    <property type="entry name" value="RIC_YtfE"/>
    <property type="match status" value="1"/>
</dbReference>
<dbReference type="InterPro" id="IPR023742">
    <property type="entry name" value="FeS-repair_YftE"/>
</dbReference>
<dbReference type="InterPro" id="IPR012312">
    <property type="entry name" value="Hemerythrin-like"/>
</dbReference>
<dbReference type="InterPro" id="IPR019903">
    <property type="entry name" value="RIC_family"/>
</dbReference>
<dbReference type="NCBIfam" id="TIGR03652">
    <property type="entry name" value="FeS_repair_RIC"/>
    <property type="match status" value="1"/>
</dbReference>
<dbReference type="NCBIfam" id="NF008221">
    <property type="entry name" value="PRK10992.1"/>
    <property type="match status" value="1"/>
</dbReference>
<dbReference type="PANTHER" id="PTHR36438">
    <property type="entry name" value="IRON-SULFUR CLUSTER REPAIR PROTEIN YTFE"/>
    <property type="match status" value="1"/>
</dbReference>
<dbReference type="PANTHER" id="PTHR36438:SF1">
    <property type="entry name" value="IRON-SULFUR CLUSTER REPAIR PROTEIN YTFE"/>
    <property type="match status" value="1"/>
</dbReference>
<dbReference type="Pfam" id="PF01814">
    <property type="entry name" value="Hemerythrin"/>
    <property type="match status" value="1"/>
</dbReference>
<dbReference type="Pfam" id="PF04405">
    <property type="entry name" value="ScdA_N"/>
    <property type="match status" value="1"/>
</dbReference>
<accession>B7LCS2</accession>
<protein>
    <recommendedName>
        <fullName evidence="1">Iron-sulfur cluster repair protein YtfE</fullName>
    </recommendedName>
</protein>